<sequence length="112" mass="12595">MNYPKREKVVEVSLASGTYSVFPRRLGVTTNDAMSIVNGAMKGAELPMIPVHKLADRDSELTYVNAFQIQTATENIVDVPERITSLYTKPEDETPEDEEVRLGTINNYFSLR</sequence>
<keyword id="KW-0903">Direct protein sequencing</keyword>
<keyword id="KW-1185">Reference proteome</keyword>
<keyword id="KW-0946">Virion</keyword>
<organism>
    <name type="scientific">Enterococcus phage phiEF24C</name>
    <name type="common">Enterococcus bacteriophage phi-EF24C</name>
    <dbReference type="NCBI Taxonomy" id="442493"/>
    <lineage>
        <taxon>Viruses</taxon>
        <taxon>Duplodnaviria</taxon>
        <taxon>Heunggongvirae</taxon>
        <taxon>Uroviricota</taxon>
        <taxon>Caudoviricetes</taxon>
        <taxon>Herelleviridae</taxon>
        <taxon>Brockvirinae</taxon>
        <taxon>Kochikohdavirus</taxon>
        <taxon>Kochikohdavirus EF24C</taxon>
    </lineage>
</organism>
<evidence type="ECO:0000269" key="1">
    <source>
    </source>
</evidence>
<evidence type="ECO:0000303" key="2">
    <source>
    </source>
</evidence>
<evidence type="ECO:0000305" key="3"/>
<evidence type="ECO:0000312" key="4">
    <source>
        <dbReference type="EMBL" id="BAF81487.1"/>
    </source>
</evidence>
<protein>
    <recommendedName>
        <fullName evidence="2">Virion protein 6</fullName>
    </recommendedName>
</protein>
<organismHost>
    <name type="scientific">Enterococcus faecalis</name>
    <name type="common">Streptococcus faecalis</name>
    <dbReference type="NCBI Taxonomy" id="1351"/>
</organismHost>
<dbReference type="EMBL" id="AP009390">
    <property type="protein sequence ID" value="BAF81487.1"/>
    <property type="molecule type" value="Genomic_DNA"/>
</dbReference>
<dbReference type="RefSeq" id="YP_001504328.1">
    <property type="nucleotide sequence ID" value="NC_009904.1"/>
</dbReference>
<dbReference type="SMR" id="P85230"/>
<dbReference type="GeneID" id="5666534"/>
<dbReference type="KEGG" id="vg:5666534"/>
<dbReference type="Proteomes" id="UP000001151">
    <property type="component" value="Genome"/>
</dbReference>
<dbReference type="GO" id="GO:0044423">
    <property type="term" value="C:virion component"/>
    <property type="evidence" value="ECO:0007669"/>
    <property type="project" value="UniProtKB-KW"/>
</dbReference>
<dbReference type="InterPro" id="IPR055633">
    <property type="entry name" value="DUF7209"/>
</dbReference>
<dbReference type="Pfam" id="PF23839">
    <property type="entry name" value="DUF7209"/>
    <property type="match status" value="1"/>
</dbReference>
<reference evidence="4" key="1">
    <citation type="journal article" date="2008" name="Appl. Environ. Microbiol.">
        <title>In silico and in vivo evaluation of bacteriophage phiEF24C, a candidate for treatment of Enterococcus faecalis infections.</title>
        <authorList>
            <person name="Uchiyama J."/>
            <person name="Rashel M."/>
            <person name="Takemura I."/>
            <person name="Wakiguchi H."/>
            <person name="Matsuzaki S."/>
        </authorList>
    </citation>
    <scope>NUCLEOTIDE SEQUENCE [GENOMIC DNA]</scope>
</reference>
<reference evidence="3" key="2">
    <citation type="journal article" date="2008" name="FEMS Microbiol. Lett.">
        <title>Isolation and characterization of a novel Enterococcus faecalis bacteriophage phiEF24C as a therapeutic candidate.</title>
        <authorList>
            <person name="Uchiyama J."/>
            <person name="Rashel M."/>
            <person name="Maeda Y."/>
            <person name="Takemura I."/>
            <person name="Sugihara S."/>
            <person name="Akechi K."/>
            <person name="Muraoka A."/>
            <person name="Wakiguchi H."/>
            <person name="Matsuzaki S."/>
        </authorList>
    </citation>
    <scope>PROTEIN SEQUENCE OF 1-10</scope>
</reference>
<proteinExistence type="evidence at protein level"/>
<accession>P85230</accession>
<accession>A8E2S1</accession>
<comment type="subcellular location">
    <subcellularLocation>
        <location evidence="1 3">Virion</location>
    </subcellularLocation>
</comment>
<feature type="chain" id="PRO_0000302100" description="Virion protein 6">
    <location>
        <begin position="1"/>
        <end position="112"/>
    </location>
</feature>
<name>VPN6_BPPHE</name>